<organism>
    <name type="scientific">Arabidopsis thaliana</name>
    <name type="common">Mouse-ear cress</name>
    <dbReference type="NCBI Taxonomy" id="3702"/>
    <lineage>
        <taxon>Eukaryota</taxon>
        <taxon>Viridiplantae</taxon>
        <taxon>Streptophyta</taxon>
        <taxon>Embryophyta</taxon>
        <taxon>Tracheophyta</taxon>
        <taxon>Spermatophyta</taxon>
        <taxon>Magnoliopsida</taxon>
        <taxon>eudicotyledons</taxon>
        <taxon>Gunneridae</taxon>
        <taxon>Pentapetalae</taxon>
        <taxon>rosids</taxon>
        <taxon>malvids</taxon>
        <taxon>Brassicales</taxon>
        <taxon>Brassicaceae</taxon>
        <taxon>Camelineae</taxon>
        <taxon>Arabidopsis</taxon>
    </lineage>
</organism>
<proteinExistence type="evidence at transcript level"/>
<protein>
    <recommendedName>
        <fullName>F-box protein At4g12382</fullName>
    </recommendedName>
</protein>
<name>FB232_ARATH</name>
<gene>
    <name type="ordered locus">At4g12382</name>
    <name type="ORF">T1P17</name>
    <name type="ORF">T4C9</name>
</gene>
<keyword id="KW-1185">Reference proteome</keyword>
<sequence>MCKKIMNPSFADLPSSLIEVIMSHLALKNNIRASAACKSWYEVGVSVRVVEKHPWLICFPKRGNLFEFRDPLHWKLYTLGLPELAESTVCYSRFGWLLMRKATSKDVFFFNPFSRDIISLPKCELAFEHITFYCPHIR</sequence>
<dbReference type="EMBL" id="AL049730">
    <property type="status" value="NOT_ANNOTATED_CDS"/>
    <property type="molecule type" value="Genomic_DNA"/>
</dbReference>
<dbReference type="EMBL" id="AL080318">
    <property type="status" value="NOT_ANNOTATED_CDS"/>
    <property type="molecule type" value="Genomic_DNA"/>
</dbReference>
<dbReference type="EMBL" id="AL161534">
    <property type="status" value="NOT_ANNOTATED_CDS"/>
    <property type="molecule type" value="Genomic_DNA"/>
</dbReference>
<dbReference type="EMBL" id="CP002687">
    <property type="protein sequence ID" value="AEE83122.1"/>
    <property type="molecule type" value="Genomic_DNA"/>
</dbReference>
<dbReference type="EMBL" id="CP002687">
    <property type="protein sequence ID" value="AEE83123.1"/>
    <property type="molecule type" value="Genomic_DNA"/>
</dbReference>
<dbReference type="EMBL" id="DQ487597">
    <property type="protein sequence ID" value="ABF59386.1"/>
    <property type="molecule type" value="Genomic_DNA"/>
</dbReference>
<dbReference type="EMBL" id="EF183063">
    <property type="status" value="NOT_ANNOTATED_CDS"/>
    <property type="molecule type" value="mRNA"/>
</dbReference>
<dbReference type="EMBL" id="EF183064">
    <property type="status" value="NOT_ANNOTATED_CDS"/>
    <property type="molecule type" value="mRNA"/>
</dbReference>
<dbReference type="RefSeq" id="NP_001118969.1">
    <property type="nucleotide sequence ID" value="NM_001125497.2"/>
</dbReference>
<dbReference type="RefSeq" id="NP_001118970.1">
    <property type="nucleotide sequence ID" value="NM_001125498.1"/>
</dbReference>
<dbReference type="SMR" id="Q1G3I7"/>
<dbReference type="STRING" id="3702.Q1G3I7"/>
<dbReference type="PaxDb" id="3702-AT4G12382.2"/>
<dbReference type="EnsemblPlants" id="AT4G12382.1">
    <property type="protein sequence ID" value="AT4G12382.1"/>
    <property type="gene ID" value="AT4G12382"/>
</dbReference>
<dbReference type="EnsemblPlants" id="AT4G12382.2">
    <property type="protein sequence ID" value="AT4G12382.2"/>
    <property type="gene ID" value="AT4G12382"/>
</dbReference>
<dbReference type="GeneID" id="6241074"/>
<dbReference type="Gramene" id="AT4G12382.1">
    <property type="protein sequence ID" value="AT4G12382.1"/>
    <property type="gene ID" value="AT4G12382"/>
</dbReference>
<dbReference type="Gramene" id="AT4G12382.2">
    <property type="protein sequence ID" value="AT4G12382.2"/>
    <property type="gene ID" value="AT4G12382"/>
</dbReference>
<dbReference type="KEGG" id="ath:AT4G12382"/>
<dbReference type="Araport" id="AT4G12382"/>
<dbReference type="TAIR" id="AT4G12382"/>
<dbReference type="eggNOG" id="ENOG502QWFR">
    <property type="taxonomic scope" value="Eukaryota"/>
</dbReference>
<dbReference type="HOGENOM" id="CLU_1858009_0_0_1"/>
<dbReference type="InParanoid" id="Q1G3I7"/>
<dbReference type="OMA" id="CELAFEH"/>
<dbReference type="PhylomeDB" id="Q1G3I7"/>
<dbReference type="PRO" id="PR:Q1G3I7"/>
<dbReference type="Proteomes" id="UP000006548">
    <property type="component" value="Chromosome 4"/>
</dbReference>
<dbReference type="ExpressionAtlas" id="Q1G3I7">
    <property type="expression patterns" value="baseline and differential"/>
</dbReference>
<dbReference type="CDD" id="cd09917">
    <property type="entry name" value="F-box_SF"/>
    <property type="match status" value="1"/>
</dbReference>
<dbReference type="Gene3D" id="1.20.1280.50">
    <property type="match status" value="1"/>
</dbReference>
<dbReference type="InterPro" id="IPR036047">
    <property type="entry name" value="F-box-like_dom_sf"/>
</dbReference>
<dbReference type="InterPro" id="IPR001810">
    <property type="entry name" value="F-box_dom"/>
</dbReference>
<dbReference type="InterPro" id="IPR005174">
    <property type="entry name" value="KIB1-4_b-propeller"/>
</dbReference>
<dbReference type="PANTHER" id="PTHR45463">
    <property type="entry name" value="OS09G0392200 PROTEIN"/>
    <property type="match status" value="1"/>
</dbReference>
<dbReference type="PANTHER" id="PTHR45463:SF4">
    <property type="entry name" value="REGULATION PROTEIN, PUTATIVE-RELATED"/>
    <property type="match status" value="1"/>
</dbReference>
<dbReference type="Pfam" id="PF03478">
    <property type="entry name" value="Beta-prop_KIB1-4"/>
    <property type="match status" value="1"/>
</dbReference>
<dbReference type="Pfam" id="PF00646">
    <property type="entry name" value="F-box"/>
    <property type="match status" value="1"/>
</dbReference>
<dbReference type="SUPFAM" id="SSF81383">
    <property type="entry name" value="F-box domain"/>
    <property type="match status" value="1"/>
</dbReference>
<accession>Q1G3I7</accession>
<feature type="chain" id="PRO_0000283501" description="F-box protein At4g12382">
    <location>
        <begin position="1"/>
        <end position="138"/>
    </location>
</feature>
<feature type="domain" description="F-box">
    <location>
        <begin position="7"/>
        <end position="53"/>
    </location>
</feature>
<reference key="1">
    <citation type="journal article" date="1999" name="Nature">
        <title>Sequence and analysis of chromosome 4 of the plant Arabidopsis thaliana.</title>
        <authorList>
            <person name="Mayer K.F.X."/>
            <person name="Schueller C."/>
            <person name="Wambutt R."/>
            <person name="Murphy G."/>
            <person name="Volckaert G."/>
            <person name="Pohl T."/>
            <person name="Duesterhoeft A."/>
            <person name="Stiekema W."/>
            <person name="Entian K.-D."/>
            <person name="Terryn N."/>
            <person name="Harris B."/>
            <person name="Ansorge W."/>
            <person name="Brandt P."/>
            <person name="Grivell L.A."/>
            <person name="Rieger M."/>
            <person name="Weichselgartner M."/>
            <person name="de Simone V."/>
            <person name="Obermaier B."/>
            <person name="Mache R."/>
            <person name="Mueller M."/>
            <person name="Kreis M."/>
            <person name="Delseny M."/>
            <person name="Puigdomenech P."/>
            <person name="Watson M."/>
            <person name="Schmidtheini T."/>
            <person name="Reichert B."/>
            <person name="Portetelle D."/>
            <person name="Perez-Alonso M."/>
            <person name="Boutry M."/>
            <person name="Bancroft I."/>
            <person name="Vos P."/>
            <person name="Hoheisel J."/>
            <person name="Zimmermann W."/>
            <person name="Wedler H."/>
            <person name="Ridley P."/>
            <person name="Langham S.-A."/>
            <person name="McCullagh B."/>
            <person name="Bilham L."/>
            <person name="Robben J."/>
            <person name="van der Schueren J."/>
            <person name="Grymonprez B."/>
            <person name="Chuang Y.-J."/>
            <person name="Vandenbussche F."/>
            <person name="Braeken M."/>
            <person name="Weltjens I."/>
            <person name="Voet M."/>
            <person name="Bastiaens I."/>
            <person name="Aert R."/>
            <person name="Defoor E."/>
            <person name="Weitzenegger T."/>
            <person name="Bothe G."/>
            <person name="Ramsperger U."/>
            <person name="Hilbert H."/>
            <person name="Braun M."/>
            <person name="Holzer E."/>
            <person name="Brandt A."/>
            <person name="Peters S."/>
            <person name="van Staveren M."/>
            <person name="Dirkse W."/>
            <person name="Mooijman P."/>
            <person name="Klein Lankhorst R."/>
            <person name="Rose M."/>
            <person name="Hauf J."/>
            <person name="Koetter P."/>
            <person name="Berneiser S."/>
            <person name="Hempel S."/>
            <person name="Feldpausch M."/>
            <person name="Lamberth S."/>
            <person name="Van den Daele H."/>
            <person name="De Keyser A."/>
            <person name="Buysshaert C."/>
            <person name="Gielen J."/>
            <person name="Villarroel R."/>
            <person name="De Clercq R."/>
            <person name="van Montagu M."/>
            <person name="Rogers J."/>
            <person name="Cronin A."/>
            <person name="Quail M.A."/>
            <person name="Bray-Allen S."/>
            <person name="Clark L."/>
            <person name="Doggett J."/>
            <person name="Hall S."/>
            <person name="Kay M."/>
            <person name="Lennard N."/>
            <person name="McLay K."/>
            <person name="Mayes R."/>
            <person name="Pettett A."/>
            <person name="Rajandream M.A."/>
            <person name="Lyne M."/>
            <person name="Benes V."/>
            <person name="Rechmann S."/>
            <person name="Borkova D."/>
            <person name="Bloecker H."/>
            <person name="Scharfe M."/>
            <person name="Grimm M."/>
            <person name="Loehnert T.-H."/>
            <person name="Dose S."/>
            <person name="de Haan M."/>
            <person name="Maarse A.C."/>
            <person name="Schaefer M."/>
            <person name="Mueller-Auer S."/>
            <person name="Gabel C."/>
            <person name="Fuchs M."/>
            <person name="Fartmann B."/>
            <person name="Granderath K."/>
            <person name="Dauner D."/>
            <person name="Herzl A."/>
            <person name="Neumann S."/>
            <person name="Argiriou A."/>
            <person name="Vitale D."/>
            <person name="Liguori R."/>
            <person name="Piravandi E."/>
            <person name="Massenet O."/>
            <person name="Quigley F."/>
            <person name="Clabauld G."/>
            <person name="Muendlein A."/>
            <person name="Felber R."/>
            <person name="Schnabl S."/>
            <person name="Hiller R."/>
            <person name="Schmidt W."/>
            <person name="Lecharny A."/>
            <person name="Aubourg S."/>
            <person name="Chefdor F."/>
            <person name="Cooke R."/>
            <person name="Berger C."/>
            <person name="Monfort A."/>
            <person name="Casacuberta E."/>
            <person name="Gibbons T."/>
            <person name="Weber N."/>
            <person name="Vandenbol M."/>
            <person name="Bargues M."/>
            <person name="Terol J."/>
            <person name="Torres A."/>
            <person name="Perez-Perez A."/>
            <person name="Purnelle B."/>
            <person name="Bent E."/>
            <person name="Johnson S."/>
            <person name="Tacon D."/>
            <person name="Jesse T."/>
            <person name="Heijnen L."/>
            <person name="Schwarz S."/>
            <person name="Scholler P."/>
            <person name="Heber S."/>
            <person name="Francs P."/>
            <person name="Bielke C."/>
            <person name="Frishman D."/>
            <person name="Haase D."/>
            <person name="Lemcke K."/>
            <person name="Mewes H.-W."/>
            <person name="Stocker S."/>
            <person name="Zaccaria P."/>
            <person name="Bevan M."/>
            <person name="Wilson R.K."/>
            <person name="de la Bastide M."/>
            <person name="Habermann K."/>
            <person name="Parnell L."/>
            <person name="Dedhia N."/>
            <person name="Gnoj L."/>
            <person name="Schutz K."/>
            <person name="Huang E."/>
            <person name="Spiegel L."/>
            <person name="Sekhon M."/>
            <person name="Murray J."/>
            <person name="Sheet P."/>
            <person name="Cordes M."/>
            <person name="Abu-Threideh J."/>
            <person name="Stoneking T."/>
            <person name="Kalicki J."/>
            <person name="Graves T."/>
            <person name="Harmon G."/>
            <person name="Edwards J."/>
            <person name="Latreille P."/>
            <person name="Courtney L."/>
            <person name="Cloud J."/>
            <person name="Abbott A."/>
            <person name="Scott K."/>
            <person name="Johnson D."/>
            <person name="Minx P."/>
            <person name="Bentley D."/>
            <person name="Fulton B."/>
            <person name="Miller N."/>
            <person name="Greco T."/>
            <person name="Kemp K."/>
            <person name="Kramer J."/>
            <person name="Fulton L."/>
            <person name="Mardis E."/>
            <person name="Dante M."/>
            <person name="Pepin K."/>
            <person name="Hillier L.W."/>
            <person name="Nelson J."/>
            <person name="Spieth J."/>
            <person name="Ryan E."/>
            <person name="Andrews S."/>
            <person name="Geisel C."/>
            <person name="Layman D."/>
            <person name="Du H."/>
            <person name="Ali J."/>
            <person name="Berghoff A."/>
            <person name="Jones K."/>
            <person name="Drone K."/>
            <person name="Cotton M."/>
            <person name="Joshu C."/>
            <person name="Antonoiu B."/>
            <person name="Zidanic M."/>
            <person name="Strong C."/>
            <person name="Sun H."/>
            <person name="Lamar B."/>
            <person name="Yordan C."/>
            <person name="Ma P."/>
            <person name="Zhong J."/>
            <person name="Preston R."/>
            <person name="Vil D."/>
            <person name="Shekher M."/>
            <person name="Matero A."/>
            <person name="Shah R."/>
            <person name="Swaby I.K."/>
            <person name="O'Shaughnessy A."/>
            <person name="Rodriguez M."/>
            <person name="Hoffman J."/>
            <person name="Till S."/>
            <person name="Granat S."/>
            <person name="Shohdy N."/>
            <person name="Hasegawa A."/>
            <person name="Hameed A."/>
            <person name="Lodhi M."/>
            <person name="Johnson A."/>
            <person name="Chen E."/>
            <person name="Marra M.A."/>
            <person name="Martienssen R."/>
            <person name="McCombie W.R."/>
        </authorList>
    </citation>
    <scope>NUCLEOTIDE SEQUENCE [LARGE SCALE GENOMIC DNA]</scope>
    <source>
        <strain>cv. Columbia</strain>
    </source>
</reference>
<reference key="2">
    <citation type="journal article" date="2017" name="Plant J.">
        <title>Araport11: a complete reannotation of the Arabidopsis thaliana reference genome.</title>
        <authorList>
            <person name="Cheng C.Y."/>
            <person name="Krishnakumar V."/>
            <person name="Chan A.P."/>
            <person name="Thibaud-Nissen F."/>
            <person name="Schobel S."/>
            <person name="Town C.D."/>
        </authorList>
    </citation>
    <scope>GENOME REANNOTATION</scope>
    <source>
        <strain>cv. Columbia</strain>
    </source>
</reference>
<reference key="3">
    <citation type="journal article" date="2006" name="Plant Biotechnol. J.">
        <title>Simultaneous high-throughput recombinational cloning of open reading frames in closed and open configurations.</title>
        <authorList>
            <person name="Underwood B.A."/>
            <person name="Vanderhaeghen R."/>
            <person name="Whitford R."/>
            <person name="Town C.D."/>
            <person name="Hilson P."/>
        </authorList>
    </citation>
    <scope>NUCLEOTIDE SEQUENCE [LARGE SCALE GENOMIC DNA]</scope>
    <source>
        <strain>cv. Columbia</strain>
    </source>
</reference>
<reference key="4">
    <citation type="journal article" date="2007" name="BMC Genomics">
        <title>Experimental validation of novel genes predicted in the un-annotated regions of the Arabidopsis genome.</title>
        <authorList>
            <person name="Moskal W.A. Jr."/>
            <person name="Wu H.C."/>
            <person name="Underwood B.A."/>
            <person name="Wang W."/>
            <person name="Town C.D."/>
            <person name="Xiao Y.-L."/>
        </authorList>
    </citation>
    <scope>NUCLEOTIDE SEQUENCE [LARGE SCALE MRNA]</scope>
    <source>
        <strain>cv. Columbia</strain>
    </source>
</reference>